<keyword id="KW-0687">Ribonucleoprotein</keyword>
<keyword id="KW-0689">Ribosomal protein</keyword>
<sequence length="121" mass="12359">MALNIENIIAEIKEATILELNDLVKAIEEEFGVTAAAPVAAAAASGEAAAAKDSFDVELTAAGDKKVGVIKVVREITGEGLKEAKAIVDNAPSVIKEGASEAEANEIKEKLEAAGASVTLK</sequence>
<feature type="chain" id="PRO_0000243500" description="Large ribosomal subunit protein bL12">
    <location>
        <begin position="1"/>
        <end position="121"/>
    </location>
</feature>
<reference key="1">
    <citation type="journal article" date="2002" name="Mol. Microbiol.">
        <title>Genome sequence of Streptococcus agalactiae, a pathogen causing invasive neonatal disease.</title>
        <authorList>
            <person name="Glaser P."/>
            <person name="Rusniok C."/>
            <person name="Buchrieser C."/>
            <person name="Chevalier F."/>
            <person name="Frangeul L."/>
            <person name="Msadek T."/>
            <person name="Zouine M."/>
            <person name="Couve E."/>
            <person name="Lalioui L."/>
            <person name="Poyart C."/>
            <person name="Trieu-Cuot P."/>
            <person name="Kunst F."/>
        </authorList>
    </citation>
    <scope>NUCLEOTIDE SEQUENCE [LARGE SCALE GENOMIC DNA]</scope>
    <source>
        <strain>NEM316</strain>
    </source>
</reference>
<organism>
    <name type="scientific">Streptococcus agalactiae serotype III (strain NEM316)</name>
    <dbReference type="NCBI Taxonomy" id="211110"/>
    <lineage>
        <taxon>Bacteria</taxon>
        <taxon>Bacillati</taxon>
        <taxon>Bacillota</taxon>
        <taxon>Bacilli</taxon>
        <taxon>Lactobacillales</taxon>
        <taxon>Streptococcaceae</taxon>
        <taxon>Streptococcus</taxon>
    </lineage>
</organism>
<name>RL7_STRA3</name>
<evidence type="ECO:0000255" key="1">
    <source>
        <dbReference type="HAMAP-Rule" id="MF_00368"/>
    </source>
</evidence>
<evidence type="ECO:0000305" key="2"/>
<proteinExistence type="inferred from homology"/>
<dbReference type="EMBL" id="AL766850">
    <property type="protein sequence ID" value="CAD47033.1"/>
    <property type="molecule type" value="Genomic_DNA"/>
</dbReference>
<dbReference type="RefSeq" id="WP_001196976.1">
    <property type="nucleotide sequence ID" value="NC_004368.1"/>
</dbReference>
<dbReference type="SMR" id="Q8E4M7"/>
<dbReference type="KEGG" id="san:rplL"/>
<dbReference type="eggNOG" id="COG0222">
    <property type="taxonomic scope" value="Bacteria"/>
</dbReference>
<dbReference type="HOGENOM" id="CLU_086499_3_2_9"/>
<dbReference type="Proteomes" id="UP000000823">
    <property type="component" value="Chromosome"/>
</dbReference>
<dbReference type="GO" id="GO:0022625">
    <property type="term" value="C:cytosolic large ribosomal subunit"/>
    <property type="evidence" value="ECO:0007669"/>
    <property type="project" value="TreeGrafter"/>
</dbReference>
<dbReference type="GO" id="GO:0003729">
    <property type="term" value="F:mRNA binding"/>
    <property type="evidence" value="ECO:0007669"/>
    <property type="project" value="TreeGrafter"/>
</dbReference>
<dbReference type="GO" id="GO:0003735">
    <property type="term" value="F:structural constituent of ribosome"/>
    <property type="evidence" value="ECO:0007669"/>
    <property type="project" value="InterPro"/>
</dbReference>
<dbReference type="GO" id="GO:0006412">
    <property type="term" value="P:translation"/>
    <property type="evidence" value="ECO:0007669"/>
    <property type="project" value="UniProtKB-UniRule"/>
</dbReference>
<dbReference type="CDD" id="cd00387">
    <property type="entry name" value="Ribosomal_L7_L12"/>
    <property type="match status" value="1"/>
</dbReference>
<dbReference type="FunFam" id="3.30.1390.10:FF:000001">
    <property type="entry name" value="50S ribosomal protein L7/L12"/>
    <property type="match status" value="1"/>
</dbReference>
<dbReference type="Gene3D" id="3.30.1390.10">
    <property type="match status" value="1"/>
</dbReference>
<dbReference type="Gene3D" id="1.20.5.710">
    <property type="entry name" value="Single helix bin"/>
    <property type="match status" value="1"/>
</dbReference>
<dbReference type="HAMAP" id="MF_00368">
    <property type="entry name" value="Ribosomal_bL12"/>
    <property type="match status" value="1"/>
</dbReference>
<dbReference type="InterPro" id="IPR000206">
    <property type="entry name" value="Ribosomal_bL12"/>
</dbReference>
<dbReference type="InterPro" id="IPR013823">
    <property type="entry name" value="Ribosomal_bL12_C"/>
</dbReference>
<dbReference type="InterPro" id="IPR014719">
    <property type="entry name" value="Ribosomal_bL12_C/ClpS-like"/>
</dbReference>
<dbReference type="InterPro" id="IPR008932">
    <property type="entry name" value="Ribosomal_bL12_oligo"/>
</dbReference>
<dbReference type="InterPro" id="IPR036235">
    <property type="entry name" value="Ribosomal_bL12_oligo_N_sf"/>
</dbReference>
<dbReference type="NCBIfam" id="TIGR00855">
    <property type="entry name" value="L12"/>
    <property type="match status" value="1"/>
</dbReference>
<dbReference type="PANTHER" id="PTHR45987">
    <property type="entry name" value="39S RIBOSOMAL PROTEIN L12"/>
    <property type="match status" value="1"/>
</dbReference>
<dbReference type="PANTHER" id="PTHR45987:SF4">
    <property type="entry name" value="LARGE RIBOSOMAL SUBUNIT PROTEIN BL12M"/>
    <property type="match status" value="1"/>
</dbReference>
<dbReference type="Pfam" id="PF00542">
    <property type="entry name" value="Ribosomal_L12"/>
    <property type="match status" value="1"/>
</dbReference>
<dbReference type="Pfam" id="PF16320">
    <property type="entry name" value="Ribosomal_L12_N"/>
    <property type="match status" value="1"/>
</dbReference>
<dbReference type="SUPFAM" id="SSF54736">
    <property type="entry name" value="ClpS-like"/>
    <property type="match status" value="1"/>
</dbReference>
<dbReference type="SUPFAM" id="SSF48300">
    <property type="entry name" value="Ribosomal protein L7/12, oligomerisation (N-terminal) domain"/>
    <property type="match status" value="1"/>
</dbReference>
<gene>
    <name evidence="1" type="primary">rplL</name>
    <name type="ordered locus">gbs1374</name>
</gene>
<comment type="function">
    <text evidence="1">Forms part of the ribosomal stalk which helps the ribosome interact with GTP-bound translation factors. Is thus essential for accurate translation.</text>
</comment>
<comment type="subunit">
    <text evidence="1">Homodimer. Part of the ribosomal stalk of the 50S ribosomal subunit. Forms a multimeric L10(L12)X complex, where L10 forms an elongated spine to which 2 to 4 L12 dimers bind in a sequential fashion. Binds GTP-bound translation factors.</text>
</comment>
<comment type="similarity">
    <text evidence="1">Belongs to the bacterial ribosomal protein bL12 family.</text>
</comment>
<accession>Q8E4M7</accession>
<protein>
    <recommendedName>
        <fullName evidence="1">Large ribosomal subunit protein bL12</fullName>
    </recommendedName>
    <alternativeName>
        <fullName evidence="2">50S ribosomal protein L7/L12</fullName>
    </alternativeName>
</protein>